<organism>
    <name type="scientific">Bovine coronavirus (strain Mebus)</name>
    <name type="common">BCoV</name>
    <name type="synonym">BCV</name>
    <dbReference type="NCBI Taxonomy" id="11132"/>
    <lineage>
        <taxon>Viruses</taxon>
        <taxon>Riboviria</taxon>
        <taxon>Orthornavirae</taxon>
        <taxon>Pisuviricota</taxon>
        <taxon>Pisoniviricetes</taxon>
        <taxon>Nidovirales</taxon>
        <taxon>Cornidovirineae</taxon>
        <taxon>Coronaviridae</taxon>
        <taxon>Orthocoronavirinae</taxon>
        <taxon>Betacoronavirus</taxon>
        <taxon>Embecovirus</taxon>
        <taxon>Betacoronavirus 1</taxon>
    </lineage>
</organism>
<feature type="chain" id="PRO_0000338158" description="Replicase polyprotein 1a">
    <location>
        <begin position="1"/>
        <end position="4383"/>
    </location>
</feature>
<feature type="chain" id="PRO_0000338159" description="Non-structural protein 1" evidence="1">
    <location>
        <begin position="1"/>
        <end position="246"/>
    </location>
</feature>
<feature type="chain" id="PRO_0000338160" description="Non-structural protein 2" evidence="1">
    <location>
        <begin position="247"/>
        <end position="851"/>
    </location>
</feature>
<feature type="chain" id="PRO_0000338161" description="Papain-like protease nsp3" evidence="1">
    <location>
        <begin position="852"/>
        <end position="2750"/>
    </location>
</feature>
<feature type="chain" id="PRO_0000338162" description="Non-structural protein 4" evidence="1">
    <location>
        <begin position="2751"/>
        <end position="3246"/>
    </location>
</feature>
<feature type="chain" id="PRO_0000338163" description="3C-like proteinase nsp5" evidence="1">
    <location>
        <begin position="3247"/>
        <end position="3549"/>
    </location>
</feature>
<feature type="chain" id="PRO_0000338164" description="Non-structural protein 6" evidence="1">
    <location>
        <begin position="3550"/>
        <end position="3836"/>
    </location>
</feature>
<feature type="chain" id="PRO_0000338165" description="Non-structural protein 7" evidence="1">
    <location>
        <begin position="3837"/>
        <end position="3925"/>
    </location>
</feature>
<feature type="chain" id="PRO_0000338166" description="Non-structural protein 8" evidence="1">
    <location>
        <begin position="3926"/>
        <end position="4122"/>
    </location>
</feature>
<feature type="chain" id="PRO_0000338167" description="RNA-capping enzyme subunit nsp9" evidence="1">
    <location>
        <begin position="4123"/>
        <end position="4232"/>
    </location>
</feature>
<feature type="chain" id="PRO_0000338168" description="Non-structural protein 10" evidence="1">
    <location>
        <begin position="4233"/>
        <end position="4369"/>
    </location>
</feature>
<feature type="chain" id="PRO_0000338169" description="Non-structural protein 11" evidence="3">
    <location>
        <begin position="4370"/>
        <end position="4383"/>
    </location>
</feature>
<feature type="transmembrane region" description="Helical" evidence="3">
    <location>
        <begin position="2138"/>
        <end position="2158"/>
    </location>
</feature>
<feature type="transmembrane region" description="Helical" evidence="3">
    <location>
        <begin position="2199"/>
        <end position="2219"/>
    </location>
</feature>
<feature type="transmembrane region" description="Helical" evidence="3">
    <location>
        <begin position="2221"/>
        <end position="2241"/>
    </location>
</feature>
<feature type="transmembrane region" description="Helical" evidence="3">
    <location>
        <begin position="2313"/>
        <end position="2333"/>
    </location>
</feature>
<feature type="transmembrane region" description="Helical" evidence="3">
    <location>
        <begin position="2343"/>
        <end position="2363"/>
    </location>
</feature>
<feature type="transmembrane region" description="Helical" evidence="3">
    <location>
        <begin position="2365"/>
        <end position="2385"/>
    </location>
</feature>
<feature type="transmembrane region" description="Helical" evidence="3">
    <location>
        <begin position="2752"/>
        <end position="2772"/>
    </location>
</feature>
<feature type="transmembrane region" description="Helical" evidence="3">
    <location>
        <begin position="3031"/>
        <end position="3051"/>
    </location>
</feature>
<feature type="transmembrane region" description="Helical" evidence="3">
    <location>
        <begin position="3063"/>
        <end position="3083"/>
    </location>
</feature>
<feature type="transmembrane region" description="Helical" evidence="3">
    <location>
        <begin position="3090"/>
        <end position="3110"/>
    </location>
</feature>
<feature type="transmembrane region" description="Helical" evidence="3">
    <location>
        <begin position="3115"/>
        <end position="3135"/>
    </location>
</feature>
<feature type="transmembrane region" description="Helical" evidence="3">
    <location>
        <begin position="3558"/>
        <end position="3578"/>
    </location>
</feature>
<feature type="transmembrane region" description="Helical" evidence="3">
    <location>
        <begin position="3588"/>
        <end position="3608"/>
    </location>
</feature>
<feature type="transmembrane region" description="Helical" evidence="3">
    <location>
        <begin position="3615"/>
        <end position="3635"/>
    </location>
</feature>
<feature type="transmembrane region" description="Helical" evidence="3">
    <location>
        <begin position="3657"/>
        <end position="3677"/>
    </location>
</feature>
<feature type="transmembrane region" description="Helical" evidence="3">
    <location>
        <begin position="3684"/>
        <end position="3704"/>
    </location>
</feature>
<feature type="transmembrane region" description="Helical" evidence="3">
    <location>
        <begin position="3711"/>
        <end position="3731"/>
    </location>
</feature>
<feature type="transmembrane region" description="Helical" evidence="3">
    <location>
        <begin position="3755"/>
        <end position="3775"/>
    </location>
</feature>
<feature type="domain" description="CoV Nsp1 globular" evidence="15">
    <location>
        <begin position="54"/>
        <end position="196"/>
    </location>
</feature>
<feature type="domain" description="BetaCoV Nsp1 C-terminal" evidence="16">
    <location>
        <begin position="216"/>
        <end position="246"/>
    </location>
</feature>
<feature type="domain" description="CoV Nsp2 N-terminal" evidence="17">
    <location>
        <begin position="250"/>
        <end position="519"/>
    </location>
</feature>
<feature type="domain" description="CoV Nsp2 middle" evidence="18">
    <location>
        <begin position="524"/>
        <end position="713"/>
    </location>
</feature>
<feature type="domain" description="CoV Nsp2 C-terminal" evidence="19">
    <location>
        <begin position="733"/>
        <end position="851"/>
    </location>
</feature>
<feature type="domain" description="Ubiquitin-like 1" evidence="4">
    <location>
        <begin position="853"/>
        <end position="966"/>
    </location>
</feature>
<feature type="domain" description="Peptidase C16 1" evidence="5">
    <location>
        <begin position="1036"/>
        <end position="1274"/>
    </location>
</feature>
<feature type="domain" description="Macro" evidence="6">
    <location>
        <begin position="1275"/>
        <end position="1435"/>
    </location>
</feature>
<feature type="domain" description="DPUP" evidence="8">
    <location>
        <begin position="1491"/>
        <end position="1563"/>
    </location>
</feature>
<feature type="domain" description="Ubiquitin-like 2" evidence="4">
    <location>
        <begin position="1562"/>
        <end position="1617"/>
    </location>
</feature>
<feature type="domain" description="Peptidase C16 2" evidence="5">
    <location>
        <begin position="1631"/>
        <end position="1892"/>
    </location>
</feature>
<feature type="domain" description="Nucleic acid-binding" evidence="9">
    <location>
        <begin position="1906"/>
        <end position="2007"/>
    </location>
</feature>
<feature type="domain" description="G2M" evidence="22">
    <location>
        <begin position="2020"/>
        <end position="2169"/>
    </location>
</feature>
<feature type="domain" description="3Ecto" evidence="21">
    <location>
        <begin position="2235"/>
        <end position="2296"/>
    </location>
</feature>
<feature type="domain" description="CoV Nsp3 Y" evidence="20">
    <location>
        <begin position="2383"/>
        <end position="2750"/>
    </location>
</feature>
<feature type="domain" description="Nsp4C" evidence="10">
    <location>
        <begin position="3149"/>
        <end position="3246"/>
    </location>
</feature>
<feature type="domain" description="Peptidase C30" evidence="7">
    <location>
        <begin position="3247"/>
        <end position="3549"/>
    </location>
</feature>
<feature type="domain" description="RdRp Nsp7 cofactor" evidence="11">
    <location>
        <begin position="3837"/>
        <end position="3925"/>
    </location>
</feature>
<feature type="domain" description="RdRp Nsp8 cofactor" evidence="12">
    <location>
        <begin position="3926"/>
        <end position="4122"/>
    </location>
</feature>
<feature type="domain" description="Nsp9 ssRNA-binding" evidence="13">
    <location>
        <begin position="4123"/>
        <end position="4232"/>
    </location>
</feature>
<feature type="domain" description="ExoN/MTase coactivator" evidence="14">
    <location>
        <begin position="4233"/>
        <end position="4370"/>
    </location>
</feature>
<feature type="zinc finger region" description="C4-type 1" evidence="5">
    <location>
        <begin position="1151"/>
        <end position="1179"/>
    </location>
</feature>
<feature type="zinc finger region" description="C4-type 2" evidence="5">
    <location>
        <begin position="1749"/>
        <end position="1785"/>
    </location>
</feature>
<feature type="zinc finger region" evidence="1">
    <location>
        <begin position="4306"/>
        <end position="4322"/>
    </location>
</feature>
<feature type="zinc finger region" evidence="1">
    <location>
        <begin position="4348"/>
        <end position="4361"/>
    </location>
</feature>
<feature type="region of interest" description="C4" evidence="17">
    <location>
        <begin position="392"/>
        <end position="416"/>
    </location>
</feature>
<feature type="region of interest" description="Disordered" evidence="23">
    <location>
        <begin position="972"/>
        <end position="992"/>
    </location>
</feature>
<feature type="region of interest" description="HD1">
    <location>
        <begin position="2138"/>
        <end position="2385"/>
    </location>
</feature>
<feature type="region of interest" description="Y1" evidence="20">
    <location>
        <begin position="2383"/>
        <end position="2473"/>
    </location>
</feature>
<feature type="region of interest" description="ZF1" evidence="20">
    <location>
        <begin position="2387"/>
        <end position="2400"/>
    </location>
</feature>
<feature type="region of interest" description="ZF2" evidence="20">
    <location>
        <begin position="2433"/>
        <end position="2443"/>
    </location>
</feature>
<feature type="region of interest" description="CoV-Y" evidence="20">
    <location>
        <begin position="2474"/>
        <end position="2750"/>
    </location>
</feature>
<feature type="region of interest" description="Y2" evidence="20">
    <location>
        <begin position="2474"/>
        <end position="2566"/>
    </location>
</feature>
<feature type="region of interest" description="Y3" evidence="20">
    <location>
        <begin position="2567"/>
        <end position="2649"/>
    </location>
</feature>
<feature type="region of interest" description="Y4" evidence="20">
    <location>
        <begin position="2650"/>
        <end position="2750"/>
    </location>
</feature>
<feature type="region of interest" description="HD2">
    <location>
        <begin position="2752"/>
        <end position="3135"/>
    </location>
</feature>
<feature type="region of interest" description="HD3">
    <location>
        <begin position="3558"/>
        <end position="3775"/>
    </location>
</feature>
<feature type="compositionally biased region" description="Acidic residues" evidence="23">
    <location>
        <begin position="972"/>
        <end position="986"/>
    </location>
</feature>
<feature type="active site" description="For PL1-PRO activity" evidence="5">
    <location>
        <position position="1074"/>
    </location>
</feature>
<feature type="active site" description="For PL1-PRO activity" evidence="5">
    <location>
        <position position="1225"/>
    </location>
</feature>
<feature type="active site" description="For PL1-PRO activity" evidence="5">
    <location>
        <position position="1236"/>
    </location>
</feature>
<feature type="active site" description="For PL2-PRO activity" evidence="5">
    <location>
        <position position="1671"/>
    </location>
</feature>
<feature type="active site" description="For PL2-PRO activity" evidence="5">
    <location>
        <position position="1828"/>
    </location>
</feature>
<feature type="active site" description="For PL2-PRO activity" evidence="5">
    <location>
        <position position="1842"/>
    </location>
</feature>
<feature type="active site" description="For 3CL-PRO activity" evidence="7">
    <location>
        <position position="3287"/>
    </location>
</feature>
<feature type="active site" description="For 3CL-PRO activity" evidence="7">
    <location>
        <position position="3391"/>
    </location>
</feature>
<feature type="binding site" evidence="17">
    <location>
        <position position="392"/>
    </location>
    <ligand>
        <name>Zn(2+)</name>
        <dbReference type="ChEBI" id="CHEBI:29105"/>
        <label>1</label>
    </ligand>
</feature>
<feature type="binding site" evidence="17">
    <location>
        <position position="397"/>
    </location>
    <ligand>
        <name>Zn(2+)</name>
        <dbReference type="ChEBI" id="CHEBI:29105"/>
        <label>1</label>
    </ligand>
</feature>
<feature type="binding site" evidence="17">
    <location>
        <position position="413"/>
    </location>
    <ligand>
        <name>Zn(2+)</name>
        <dbReference type="ChEBI" id="CHEBI:29105"/>
        <label>1</label>
    </ligand>
</feature>
<feature type="binding site" evidence="17">
    <location>
        <position position="416"/>
    </location>
    <ligand>
        <name>Zn(2+)</name>
        <dbReference type="ChEBI" id="CHEBI:29105"/>
        <label>1</label>
    </ligand>
</feature>
<feature type="binding site" evidence="5">
    <location>
        <position position="1151"/>
    </location>
    <ligand>
        <name>Zn(2+)</name>
        <dbReference type="ChEBI" id="CHEBI:29105"/>
        <label>2</label>
    </ligand>
</feature>
<feature type="binding site" evidence="5">
    <location>
        <position position="1154"/>
    </location>
    <ligand>
        <name>Zn(2+)</name>
        <dbReference type="ChEBI" id="CHEBI:29105"/>
        <label>2</label>
    </ligand>
</feature>
<feature type="binding site" evidence="5">
    <location>
        <position position="1177"/>
    </location>
    <ligand>
        <name>Zn(2+)</name>
        <dbReference type="ChEBI" id="CHEBI:29105"/>
        <label>2</label>
    </ligand>
</feature>
<feature type="binding site" evidence="5">
    <location>
        <position position="1179"/>
    </location>
    <ligand>
        <name>Zn(2+)</name>
        <dbReference type="ChEBI" id="CHEBI:29105"/>
        <label>2</label>
    </ligand>
</feature>
<feature type="binding site" evidence="5">
    <location>
        <position position="1749"/>
    </location>
    <ligand>
        <name>Zn(2+)</name>
        <dbReference type="ChEBI" id="CHEBI:29105"/>
        <label>3</label>
    </ligand>
</feature>
<feature type="binding site" evidence="5">
    <location>
        <position position="1751"/>
    </location>
    <ligand>
        <name>Zn(2+)</name>
        <dbReference type="ChEBI" id="CHEBI:29105"/>
        <label>3</label>
    </ligand>
</feature>
<feature type="binding site" evidence="5">
    <location>
        <position position="1783"/>
    </location>
    <ligand>
        <name>Zn(2+)</name>
        <dbReference type="ChEBI" id="CHEBI:29105"/>
        <label>3</label>
    </ligand>
</feature>
<feature type="binding site" evidence="5">
    <location>
        <position position="1785"/>
    </location>
    <ligand>
        <name>Zn(2+)</name>
        <dbReference type="ChEBI" id="CHEBI:29105"/>
        <label>3</label>
    </ligand>
</feature>
<feature type="binding site" evidence="20">
    <location>
        <position position="2387"/>
    </location>
    <ligand>
        <name>Zn(2+)</name>
        <dbReference type="ChEBI" id="CHEBI:29105"/>
        <label>4</label>
    </ligand>
</feature>
<feature type="binding site" evidence="20">
    <location>
        <position position="2392"/>
    </location>
    <ligand>
        <name>Zn(2+)</name>
        <dbReference type="ChEBI" id="CHEBI:29105"/>
        <label>4</label>
    </ligand>
</feature>
<feature type="binding site" evidence="20">
    <location>
        <position position="2397"/>
    </location>
    <ligand>
        <name>Zn(2+)</name>
        <dbReference type="ChEBI" id="CHEBI:29105"/>
        <label>4</label>
    </ligand>
</feature>
<feature type="binding site" evidence="20">
    <location>
        <position position="2400"/>
    </location>
    <ligand>
        <name>Zn(2+)</name>
        <dbReference type="ChEBI" id="CHEBI:29105"/>
        <label>4</label>
    </ligand>
</feature>
<feature type="binding site" evidence="20">
    <location>
        <position position="2433"/>
    </location>
    <ligand>
        <name>Zn(2+)</name>
        <dbReference type="ChEBI" id="CHEBI:29105"/>
        <label>5</label>
    </ligand>
</feature>
<feature type="binding site" evidence="20">
    <location>
        <position position="2436"/>
    </location>
    <ligand>
        <name>Zn(2+)</name>
        <dbReference type="ChEBI" id="CHEBI:29105"/>
        <label>5</label>
    </ligand>
</feature>
<feature type="binding site" evidence="20">
    <location>
        <position position="2440"/>
    </location>
    <ligand>
        <name>Zn(2+)</name>
        <dbReference type="ChEBI" id="CHEBI:29105"/>
        <label>5</label>
    </ligand>
</feature>
<feature type="binding site" evidence="20">
    <location>
        <position position="2443"/>
    </location>
    <ligand>
        <name>Zn(2+)</name>
        <dbReference type="ChEBI" id="CHEBI:29105"/>
        <label>5</label>
    </ligand>
</feature>
<feature type="binding site" evidence="14">
    <location>
        <position position="4306"/>
    </location>
    <ligand>
        <name>Zn(2+)</name>
        <dbReference type="ChEBI" id="CHEBI:29105"/>
        <label>6</label>
    </ligand>
</feature>
<feature type="binding site" evidence="14">
    <location>
        <position position="4309"/>
    </location>
    <ligand>
        <name>Zn(2+)</name>
        <dbReference type="ChEBI" id="CHEBI:29105"/>
        <label>6</label>
    </ligand>
</feature>
<feature type="binding site" evidence="14">
    <location>
        <position position="4315"/>
    </location>
    <ligand>
        <name>Zn(2+)</name>
        <dbReference type="ChEBI" id="CHEBI:29105"/>
        <label>6</label>
    </ligand>
</feature>
<feature type="binding site" evidence="14">
    <location>
        <position position="4322"/>
    </location>
    <ligand>
        <name>Zn(2+)</name>
        <dbReference type="ChEBI" id="CHEBI:29105"/>
        <label>6</label>
    </ligand>
</feature>
<feature type="binding site" evidence="14">
    <location>
        <position position="4348"/>
    </location>
    <ligand>
        <name>Zn(2+)</name>
        <dbReference type="ChEBI" id="CHEBI:29105"/>
        <label>7</label>
    </ligand>
</feature>
<feature type="binding site" evidence="14">
    <location>
        <position position="4351"/>
    </location>
    <ligand>
        <name>Zn(2+)</name>
        <dbReference type="ChEBI" id="CHEBI:29105"/>
        <label>7</label>
    </ligand>
</feature>
<feature type="binding site" evidence="14">
    <location>
        <position position="4359"/>
    </location>
    <ligand>
        <name>Zn(2+)</name>
        <dbReference type="ChEBI" id="CHEBI:29105"/>
        <label>7</label>
    </ligand>
</feature>
<feature type="binding site" evidence="14">
    <location>
        <position position="4361"/>
    </location>
    <ligand>
        <name>Zn(2+)</name>
        <dbReference type="ChEBI" id="CHEBI:29105"/>
        <label>7</label>
    </ligand>
</feature>
<feature type="site" description="Cleavage; by PL1-PRO" evidence="1">
    <location>
        <begin position="246"/>
        <end position="247"/>
    </location>
</feature>
<feature type="site" description="Cleavage; by PL1-PRO" evidence="1">
    <location>
        <begin position="851"/>
        <end position="852"/>
    </location>
</feature>
<feature type="site" description="Cleavage; by PL2-PRO" evidence="1">
    <location>
        <begin position="2750"/>
        <end position="2751"/>
    </location>
</feature>
<feature type="site" description="Cleavage; by 3CL-PRO" evidence="1">
    <location>
        <begin position="3246"/>
        <end position="3247"/>
    </location>
</feature>
<feature type="site" description="Cleavage; by 3CL-PRO" evidence="1">
    <location>
        <begin position="3549"/>
        <end position="3550"/>
    </location>
</feature>
<feature type="site" description="Cleavage; by 3CL-PRO" evidence="1">
    <location>
        <begin position="3836"/>
        <end position="3837"/>
    </location>
</feature>
<feature type="site" description="Cleavage; by 3CL-PRO" evidence="1">
    <location>
        <begin position="3925"/>
        <end position="3926"/>
    </location>
</feature>
<feature type="site" description="Cleavage; by 3CL-PRO" evidence="1">
    <location>
        <begin position="4122"/>
        <end position="4123"/>
    </location>
</feature>
<feature type="site" description="Cleavage; by 3CL-PRO" evidence="1">
    <location>
        <begin position="4232"/>
        <end position="4233"/>
    </location>
</feature>
<feature type="site" description="Cleavage; by 3CL-PRO" evidence="1">
    <location>
        <begin position="4369"/>
        <end position="4370"/>
    </location>
</feature>
<feature type="disulfide bond" evidence="21">
    <location>
        <begin position="2251"/>
        <end position="2275"/>
    </location>
</feature>
<feature type="disulfide bond" evidence="21">
    <location>
        <begin position="2266"/>
        <end position="2272"/>
    </location>
</feature>
<evidence type="ECO:0000250" key="1"/>
<evidence type="ECO:0000250" key="2">
    <source>
        <dbReference type="UniProtKB" id="P0DTC1"/>
    </source>
</evidence>
<evidence type="ECO:0000255" key="3"/>
<evidence type="ECO:0000255" key="4">
    <source>
        <dbReference type="PROSITE-ProRule" id="PRU00214"/>
    </source>
</evidence>
<evidence type="ECO:0000255" key="5">
    <source>
        <dbReference type="PROSITE-ProRule" id="PRU00444"/>
    </source>
</evidence>
<evidence type="ECO:0000255" key="6">
    <source>
        <dbReference type="PROSITE-ProRule" id="PRU00490"/>
    </source>
</evidence>
<evidence type="ECO:0000255" key="7">
    <source>
        <dbReference type="PROSITE-ProRule" id="PRU00772"/>
    </source>
</evidence>
<evidence type="ECO:0000255" key="8">
    <source>
        <dbReference type="PROSITE-ProRule" id="PRU01289"/>
    </source>
</evidence>
<evidence type="ECO:0000255" key="9">
    <source>
        <dbReference type="PROSITE-ProRule" id="PRU01290"/>
    </source>
</evidence>
<evidence type="ECO:0000255" key="10">
    <source>
        <dbReference type="PROSITE-ProRule" id="PRU01291"/>
    </source>
</evidence>
<evidence type="ECO:0000255" key="11">
    <source>
        <dbReference type="PROSITE-ProRule" id="PRU01294"/>
    </source>
</evidence>
<evidence type="ECO:0000255" key="12">
    <source>
        <dbReference type="PROSITE-ProRule" id="PRU01295"/>
    </source>
</evidence>
<evidence type="ECO:0000255" key="13">
    <source>
        <dbReference type="PROSITE-ProRule" id="PRU01296"/>
    </source>
</evidence>
<evidence type="ECO:0000255" key="14">
    <source>
        <dbReference type="PROSITE-ProRule" id="PRU01297"/>
    </source>
</evidence>
<evidence type="ECO:0000255" key="15">
    <source>
        <dbReference type="PROSITE-ProRule" id="PRU01307"/>
    </source>
</evidence>
<evidence type="ECO:0000255" key="16">
    <source>
        <dbReference type="PROSITE-ProRule" id="PRU01308"/>
    </source>
</evidence>
<evidence type="ECO:0000255" key="17">
    <source>
        <dbReference type="PROSITE-ProRule" id="PRU01333"/>
    </source>
</evidence>
<evidence type="ECO:0000255" key="18">
    <source>
        <dbReference type="PROSITE-ProRule" id="PRU01334"/>
    </source>
</evidence>
<evidence type="ECO:0000255" key="19">
    <source>
        <dbReference type="PROSITE-ProRule" id="PRU01335"/>
    </source>
</evidence>
<evidence type="ECO:0000255" key="20">
    <source>
        <dbReference type="PROSITE-ProRule" id="PRU01336"/>
    </source>
</evidence>
<evidence type="ECO:0000255" key="21">
    <source>
        <dbReference type="PROSITE-ProRule" id="PRU01337"/>
    </source>
</evidence>
<evidence type="ECO:0000255" key="22">
    <source>
        <dbReference type="PROSITE-ProRule" id="PRU01338"/>
    </source>
</evidence>
<evidence type="ECO:0000256" key="23">
    <source>
        <dbReference type="SAM" id="MobiDB-lite"/>
    </source>
</evidence>
<evidence type="ECO:0000305" key="24"/>
<comment type="function">
    <text evidence="1">The papain-like proteinase 1 (PL1-PRO) and papain-like proteinase 2 (PL2-PRO) are responsible for the cleavages located at the N-terminus of the replicase polyprotein. In addition, PLP2 possesses a deubiquitinating/deISGylating activity and processes both 'Lys-48'- and 'Lys-63'-linked polyubiquitin chains from cellular substrates. Antagonizes innate immune induction of type I interferon by blocking the phosphorylation, dimerization and subsequent nuclear translocation of host IRF-3 (By similarity).</text>
</comment>
<comment type="function">
    <molecule>3C-like proteinase nsp5</molecule>
    <text evidence="7">Responsible for the majority of cleavages as it cleaves the C-terminus of replicase polyprotein at 11 sites. Recognizes substrates containing the core sequence [ILMVF]-Q-|-[SGACN]. Inhibited by the substrate-analog Cbz-Val-Asn-Ser-Thr-Leu-Gln-CMK. Also contains an ADP-ribose-1''-phosphate (ADRP)-binding function (By similarity).</text>
</comment>
<comment type="function">
    <text evidence="1">Nsp7-nsp8 hexadecamer may possibly confer processivity to the polymerase, maybe by binding to dsRNA or by producing primers utilized by the latter.</text>
</comment>
<comment type="function">
    <molecule>RNA-capping enzyme subunit nsp9</molecule>
    <text evidence="2">Catalytic subunit of viral RNA capping enzyme which catalyzes the RNA guanylyltransferase reaction for genomic and sub-genomic RNAs. The kinase-like NiRAN domain of NSP12 transfers RNA to the amino terminus of NSP9, forming a covalent RNA-protein intermediate. Subsequently, the NiRAN domain transfers RNA to GDP, forming the core cap structure GpppA-RNA. The NSP14 and NSP16 methyltransferases then add methyl groups to form functional cap structures.</text>
</comment>
<comment type="function">
    <molecule>Non-structural protein 1</molecule>
    <text evidence="1">Binds to the 40S ribosomal subunit and inhibits host translation. The nsp1-40S ribosome complex further induces an endonucleolytic cleavage near the 5'UTR of host mRNAs, targeting them for degradation. By suppressing host gene expression, nsp1 facilitates efficient viral gene expression in infected cells and evasion from host immune response (By similarity).</text>
</comment>
<comment type="catalytic activity">
    <molecule>Papain-like protease nsp3</molecule>
    <reaction evidence="2">
        <text>Thiol-dependent hydrolysis of ester, thioester, amide, peptide and isopeptide bonds formed by the C-terminal Gly of ubiquitin (a 76-residue protein attached to proteins as an intracellular targeting signal).</text>
        <dbReference type="EC" id="3.4.19.12"/>
    </reaction>
</comment>
<comment type="catalytic activity">
    <molecule>3C-like proteinase nsp5</molecule>
    <reaction evidence="2">
        <text>TSAVLQ-|-SGFRK-NH2 and SGVTFQ-|-GKFKK the two peptides corresponding to the two self-cleavage sites of the SARS 3C-like proteinase are the two most reactive peptide substrates. The enzyme exhibits a strong preference for substrates containing Gln at P1 position and Leu at P2 position.</text>
        <dbReference type="EC" id="3.4.22.69"/>
    </reaction>
</comment>
<comment type="catalytic activity">
    <molecule>RNA-capping enzyme subunit nsp9</molecule>
    <reaction evidence="2">
        <text>a 5'-end diphospho-ribonucleoside in mRNA + GTP + H(+) = a 5'-end (5'-triphosphoguanosine)-ribonucleoside in mRNA + diphosphate</text>
        <dbReference type="Rhea" id="RHEA:67012"/>
        <dbReference type="Rhea" id="RHEA-COMP:17165"/>
        <dbReference type="Rhea" id="RHEA-COMP:17166"/>
        <dbReference type="ChEBI" id="CHEBI:15378"/>
        <dbReference type="ChEBI" id="CHEBI:33019"/>
        <dbReference type="ChEBI" id="CHEBI:37565"/>
        <dbReference type="ChEBI" id="CHEBI:167616"/>
        <dbReference type="ChEBI" id="CHEBI:167617"/>
        <dbReference type="EC" id="2.7.7.50"/>
    </reaction>
    <physiologicalReaction direction="right-to-left" evidence="2">
        <dbReference type="Rhea" id="RHEA:67014"/>
    </physiologicalReaction>
</comment>
<comment type="subunit">
    <text evidence="1">3CL-PRO exists as monomer and homodimer. Eight copies of nsp7 and eight copies of nsp8 assemble to form a heterohexadecamer. Nsp9 is a dimer. Nsp10 forms a dodecamer (By similarity).</text>
</comment>
<comment type="subcellular location">
    <molecule>Papain-like protease nsp3</molecule>
    <subcellularLocation>
        <location evidence="24">Host membrane</location>
        <topology evidence="24">Multi-pass membrane protein</topology>
    </subcellularLocation>
</comment>
<comment type="subcellular location">
    <molecule>Non-structural protein 4</molecule>
    <subcellularLocation>
        <location evidence="24">Host membrane</location>
        <topology evidence="24">Multi-pass membrane protein</topology>
    </subcellularLocation>
</comment>
<comment type="subcellular location">
    <molecule>Non-structural protein 6</molecule>
    <subcellularLocation>
        <location evidence="24">Host membrane</location>
        <topology evidence="24">Multi-pass membrane protein</topology>
    </subcellularLocation>
</comment>
<comment type="subcellular location">
    <molecule>Non-structural protein 7</molecule>
    <subcellularLocation>
        <location evidence="1">Host cytoplasm</location>
        <location evidence="1">Host perinuclear region</location>
    </subcellularLocation>
    <text evidence="1">nsp7, nsp8, nsp9 and nsp10 are localized in cytoplasmic foci, largely perinuclear. Late in infection, they merge into confluent complexes (By similarity).</text>
</comment>
<comment type="subcellular location">
    <molecule>Non-structural protein 8</molecule>
    <subcellularLocation>
        <location evidence="1">Host cytoplasm</location>
        <location evidence="1">Host perinuclear region</location>
    </subcellularLocation>
    <text evidence="1">nsp7, nsp8, nsp9 and nsp10 are localized in cytoplasmic foci, largely perinuclear. Late in infection, they merge into confluent complexes (By similarity).</text>
</comment>
<comment type="subcellular location">
    <molecule>RNA-capping enzyme subunit nsp9</molecule>
    <subcellularLocation>
        <location evidence="1">Host cytoplasm</location>
        <location evidence="1">Host perinuclear region</location>
    </subcellularLocation>
    <text evidence="1">nsp7, nsp8, nsp9 and nsp10 are localized in cytoplasmic foci, largely perinuclear. Late in infection, they merge into confluent complexes (By similarity).</text>
</comment>
<comment type="subcellular location">
    <molecule>Non-structural protein 10</molecule>
    <subcellularLocation>
        <location evidence="1">Host cytoplasm</location>
        <location evidence="1">Host perinuclear region</location>
    </subcellularLocation>
    <text evidence="1">nsp7, nsp8, nsp9 and nsp10 are localized in cytoplasmic foci, largely perinuclear. Late in infection, they merge into confluent complexes (By similarity).</text>
</comment>
<comment type="alternative products">
    <event type="ribosomal frameshifting"/>
    <isoform>
        <id>P0C6U0-1</id>
        <name>Replicase polyprotein 1a</name>
        <name>pp1a</name>
        <name>ORF1a polyprotein</name>
        <sequence type="displayed"/>
    </isoform>
    <isoform>
        <id>P0C6W9-1</id>
        <name>Replicase polyprotein 1ab</name>
        <name>pp1ab</name>
        <sequence type="external"/>
    </isoform>
</comment>
<comment type="domain">
    <text>The hydrophobic domains (HD) could mediate the membrane association of the replication complex and thereby alter the architecture of the host cell membrane.</text>
</comment>
<comment type="PTM">
    <text evidence="1">Specific enzymatic cleavages in vivo by its own proteases yield mature proteins. 3CL-PRO and PL-PRO proteinases are autocatalytically processed (By similarity).</text>
</comment>
<comment type="miscellaneous">
    <molecule>Isoform Replicase polyprotein 1a</molecule>
    <text>Produced by conventional translation.</text>
</comment>
<comment type="similarity">
    <text evidence="24">Belongs to the coronaviruses polyprotein 1ab family.</text>
</comment>
<organismHost>
    <name type="scientific">Bos taurus</name>
    <name type="common">Bovine</name>
    <dbReference type="NCBI Taxonomy" id="9913"/>
</organismHost>
<keyword id="KW-1072">Activation of host autophagy by virus</keyword>
<keyword id="KW-1132">Decay of host mRNAs by virus</keyword>
<keyword id="KW-1015">Disulfide bond</keyword>
<keyword id="KW-0255">Endonuclease</keyword>
<keyword id="KW-1262">Eukaryotic host gene expression shutoff by virus</keyword>
<keyword id="KW-1193">Eukaryotic host translation shutoff by virus</keyword>
<keyword id="KW-1035">Host cytoplasm</keyword>
<keyword id="KW-1190">Host gene expression shutoff by virus</keyword>
<keyword id="KW-1043">Host membrane</keyword>
<keyword id="KW-1192">Host mRNA suppression by virus</keyword>
<keyword id="KW-0945">Host-virus interaction</keyword>
<keyword id="KW-0378">Hydrolase</keyword>
<keyword id="KW-1090">Inhibition of host innate immune response by virus</keyword>
<keyword id="KW-1114">Inhibition of host interferon signaling pathway by virus</keyword>
<keyword id="KW-1092">Inhibition of host IRF3 by virus</keyword>
<keyword id="KW-1095">Inhibition of host ISG15 by virus</keyword>
<keyword id="KW-1113">Inhibition of host RLR pathway by virus</keyword>
<keyword id="KW-0922">Interferon antiviral system evasion</keyword>
<keyword id="KW-0472">Membrane</keyword>
<keyword id="KW-0479">Metal-binding</keyword>
<keyword id="KW-0489">Methyltransferase</keyword>
<keyword id="KW-1127">Modulation of host ubiquitin pathway by viral deubiquitinase</keyword>
<keyword id="KW-1130">Modulation of host ubiquitin pathway by virus</keyword>
<keyword id="KW-0540">Nuclease</keyword>
<keyword id="KW-0645">Protease</keyword>
<keyword id="KW-0677">Repeat</keyword>
<keyword id="KW-0688">Ribosomal frameshifting</keyword>
<keyword id="KW-0694">RNA-binding</keyword>
<keyword id="KW-0788">Thiol protease</keyword>
<keyword id="KW-0808">Transferase</keyword>
<keyword id="KW-0812">Transmembrane</keyword>
<keyword id="KW-1133">Transmembrane helix</keyword>
<keyword id="KW-0833">Ubl conjugation pathway</keyword>
<keyword id="KW-0899">Viral immunoevasion</keyword>
<keyword id="KW-0862">Zinc</keyword>
<keyword id="KW-0863">Zinc-finger</keyword>
<gene>
    <name type="ORF">1a</name>
</gene>
<protein>
    <recommendedName>
        <fullName>Replicase polyprotein 1a</fullName>
        <shortName>pp1a</shortName>
    </recommendedName>
    <alternativeName>
        <fullName>ORF1a polyprotein</fullName>
    </alternativeName>
    <component>
        <recommendedName>
            <fullName>Non-structural protein 1</fullName>
            <shortName>nsp1</shortName>
        </recommendedName>
        <alternativeName>
            <fullName>p28</fullName>
        </alternativeName>
    </component>
    <component>
        <recommendedName>
            <fullName>Non-structural protein 2</fullName>
            <shortName>nsp2</shortName>
        </recommendedName>
        <alternativeName>
            <fullName>p65</fullName>
        </alternativeName>
    </component>
    <component>
        <recommendedName>
            <fullName>Papain-like protease nsp3</fullName>
            <shortName>PL-PRO</shortName>
            <ecNumber>3.4.19.12</ecNumber>
            <ecNumber>3.4.22.-</ecNumber>
        </recommendedName>
        <alternativeName>
            <fullName>Non-structural protein 3</fullName>
            <shortName>nsp3</shortName>
        </alternativeName>
        <alternativeName>
            <fullName>PL1-PRO/PL2-PRO</fullName>
        </alternativeName>
        <alternativeName>
            <fullName>PL1/PL2</fullName>
        </alternativeName>
        <alternativeName>
            <fullName>PL2-PRO</fullName>
        </alternativeName>
        <alternativeName>
            <fullName>Papain-like proteinases 1/2</fullName>
        </alternativeName>
        <alternativeName>
            <fullName>p210</fullName>
        </alternativeName>
    </component>
    <component>
        <recommendedName>
            <fullName>Non-structural protein 4</fullName>
            <shortName>nsp4</shortName>
        </recommendedName>
        <alternativeName>
            <fullName>Peptide HD2</fullName>
        </alternativeName>
        <alternativeName>
            <fullName>p44</fullName>
        </alternativeName>
    </component>
    <component>
        <recommendedName>
            <fullName>3C-like proteinase nsp5</fullName>
            <shortName>3CL-PRO</shortName>
            <shortName>3CLp</shortName>
            <ecNumber>3.4.22.69</ecNumber>
        </recommendedName>
        <alternativeName>
            <fullName>M-PRO</fullName>
        </alternativeName>
        <alternativeName>
            <fullName>nsp5</fullName>
        </alternativeName>
        <alternativeName>
            <fullName>p27</fullName>
        </alternativeName>
    </component>
    <component>
        <recommendedName>
            <fullName>Non-structural protein 6</fullName>
            <shortName>nsp6</shortName>
        </recommendedName>
    </component>
    <component>
        <recommendedName>
            <fullName>Non-structural protein 7</fullName>
            <shortName>nsp7</shortName>
        </recommendedName>
        <alternativeName>
            <fullName>p10</fullName>
        </alternativeName>
    </component>
    <component>
        <recommendedName>
            <fullName>Non-structural protein 8</fullName>
            <shortName>nsp8</shortName>
        </recommendedName>
        <alternativeName>
            <fullName>p22</fullName>
        </alternativeName>
    </component>
    <component>
        <recommendedName>
            <fullName>RNA-capping enzyme subunit nsp9</fullName>
        </recommendedName>
        <alternativeName>
            <fullName>Non-structural protein 9</fullName>
            <shortName>nsp9</shortName>
            <ecNumber>2.7.7.50</ecNumber>
        </alternativeName>
        <alternativeName>
            <fullName>p12</fullName>
        </alternativeName>
    </component>
    <component>
        <recommendedName>
            <fullName>Non-structural protein 10</fullName>
            <shortName>nsp10</shortName>
        </recommendedName>
        <alternativeName>
            <fullName>Growth factor-like peptide</fullName>
            <shortName>GFL</shortName>
        </alternativeName>
        <alternativeName>
            <fullName>p15</fullName>
        </alternativeName>
    </component>
    <component>
        <recommendedName>
            <fullName>Non-structural protein 11</fullName>
            <shortName>nsp11</shortName>
        </recommendedName>
    </component>
</protein>
<proteinExistence type="inferred from homology"/>
<name>R1A_CVBM</name>
<sequence length="4383" mass="490562">MSKINKYGLELHWAPEFPWMFEDAEEKLDNPSSSEVDIVCSTTAQKLETGGICPENHVMVDCRRLLKQECCVQSSLIREIVMNTRPYDLEVLLQDALQSREAVLVTPPLGMSLEACYVRGCNPNGWTMGLFRRRSVCNTGRCAVNKHVAYQLYMIDPAGVCFGAGQFVGWVIPLAFMPVQSRKFIVPWVMYLRKCGEKGAYNKDHKRGGFEHVYNFKVEDAYDLVHDEPKGKFSKKAYALIRGYRGVKPLLYVDQYGCDYTGGLADGLEAYADKTLQEMKALFPIWSQELPFDVTVAWHVVRDPRYVMRLQSASTIRSVAYVANPTEDLCDGSVVIKEPVHVYADDSIILRQHNLVDIMSCFYMEADAVVNAFYGVDLKDCGFVMQFGYIDCEQDLCDFKGWVPGNMIDGFACTTCGHVYETGDLLAQSSGVLPVNPVLHTKSAAGYGGFGCKDSFTLYGQTVVYFGGCVYWSPARNIWIPILKSSVKSYDGLVYTGVVGCKAIVKETNLICKALYLDYVQHKCGNLHQRELLGVSDVWHKQLLLNRGVYKPLLENIDYFNMRRAKFSLETFTVCADGFMPFLLDDLVPRAYYLAVSGQAFCDYAGKICHAVVSKSKELLDVSLDSLGAAIHYLNSKIVDLAQHFSDFGTSFVSKIVHFFKTFTTSTALAFAWVLFHVLHGAYIVVESDIYFVKNIPRYASAVAQAFRSVAKVVLDSLRVTFIDGLSCFKIGRRRICLSGSKIYEVERGLLHSSQLPLDVYDLTMPSQVQKTKQKPIYLKGSGSDFSLADSVVEVVTTSLTPCGYSEPPKVADKICIVDNVYMAKAGDKYYPVVVDGHVGLLDQAWRVPCAGRCVTFKEQPTVNEIASTPKTIKVFYELDKDFNTILNTACGVFEVDDTVDMEEFYAVVIDAIEEKLSPCKELEGVGAKVSAFLQKLEDNSLFLFDEAGEEVLAPKLYCAFTAPEDDDFLEESGVEEDDVEGEETDLTVTSAGEPCVASEQEESSEILEDTLDDGPCVETSDSQVEEDVQMSDFVDLESVIQDYENVCFEFYTTEPEFVKVLDLYVPKATRNNCWLRSVLAVMQKLPCQFKDKNLQDLWVLYKQQYSQLFVDTLVNKIPANIVVPQGGYVADFAYWFLTLCDWQCVAYWKCIKCDLALKLKGLDAMFFYGDVVSHVCKCGESMVLIDVDVPFTAHFALKDKLFCAFITKRSVYKAACVVDVNDSHSMAVVDGKQIDDHRITSITSDKFDFIIGHGMSFSMTTFEIAQLYGSCITPNVCFVKGDIIKVSKRVKAEVVVNPANGHMAHGGGVAKAIAVAAGQQFVKETTDMVKSKGVCATGDCYVSTGGKLCKTVLNVVGPDARTQGKQSYALLERVYKHLNKYDCVVTTLISAGIFSVPSDVSLTYLLGTAKKQVVLVSNNQEDFDLISKCQITAVEGTKKLAERLSFNVGRSIVYETDANKLILSNDVAFVSTFNVLQDVLSLRHDIALDDDARTFVQSNVDVVPEGWRVVNKFYQINGVRTVKYFECPGGIDICSQDKVFGYVQQGSFNKATVAQIKALFLDKVDILLTVDGVNFTNRFVPVGESFGKSLGNVFCDGVNVTKHKCDINYKGKVFFQFDNLSSEDLKAVRSSFNFDQKELLAYYNMLVNCSKWQVVFNGKYFTFKQANNNCFVNVSCLMLQSLNLKFKIVQWQEAWLEFRSGRPARFVSLVLAKGGFKFGDPADSRDFLRVVFSQVDLTGAICDFEIACKCGVKQEQRTGVDAVMHFGTLSREDLEIGYTVDCSCGKKLIHCVRFDVPFLICSNTPASVKLPKGVGSANIFKGDKVGHYVHVKCEQSYQLYDASNVKKVTDVTGNLSDCLYLKNLKQTFKSVLTTYYLDDVKKIEYKPDLSQYYCDGGKYYTQRIIKAQFKTFEKVDGVYTNFKLIGHTVCDILNAKLGFDSSKEFVEYKVTEWPTATGDVVLATDDLYVKRYERGCITFGKPVIWLSHEQASLNSLTYFNRPLLVDENKFDVLKVDDVDDGGDISESDAKEPKEINIIKLSGVKKPFKVEDSVIVNDDTSEIKYVKSLSIVDVYDMWLTGCRCVVRTANALSRAVNVPTIRKFIKFGMTLVSIPIDLLNLREIKPVFNVVKAVRNKISACFNFIKWLFVLLFGWIKISADNKVIYTTEVASKLTCKLVALAFKNAFLTFKWSVVARGACIIATIFLLWFNFIYANVIFSDFYLPKIGFLPTFVGKIAQWIKNTFSLVTICDLYSIQDVGFKNQYCNGSIACQFCLAGFDMLDNYKAIDVVQYEADRRAFVDYTGVLKIVIELIVSYALYTAWFYPLFALISIQILTTWLPELFMLSTLHWSVRLLVSLANMLPAHVFMRFYIIIASFIKLFSLFRHVAYGCSKSGCLFCYKRNRSLRVKCSTIVGGMIRYYDAMANGGTGFCSKHQWNCIDCDSYKPGNTFITVEAALDLSKELKRPIQPTDVAYHTVTDVKQVGCYMRLFYDRDGQRTYDDVNASLFVDYSNLLHSKVKSVPNMHVVVVENDADKANFLNAAVFYAQSLFRPILMVDKNLITTANTGTSVTETMFDVYVDTFLSMFDVDKKSLNALIATAHSSIKQGTQICKVLDTFLSCARKSCSIDSDVDTKCLADSVMSAVSAGLELTDESCNNLVPTYLKGDNIVAADLGVLIQNSAKHVQGNVAKIAGVSCIWSVDAFNQLSSDFQHKLKKACCKTGLKLKLTYNKQMANVSVLTTPFSLKGGAVFSYFVYVCFVLSLVCFIGLWCLMPTYTVHKSDFQLPVYASYKVLDNGVIRDVSVEDVCFANKFEQFDQWYESTFGLSYYSNSMACPIVVAVVDQDFGSTVFNVPTKVLRYGYHVLHFITHALSADGVQCYTPHSQISYSNFYASGCVLSSACTMFAMADGSPQPYCYTDGLMQNASLYSSLVPHVRYNLANAKGFIRFPEVLREGLVRIVRTRSMPYCRVGLCEEADEGICFNFNGSWVLNNDYYRSLPGTFCGRDVFDLIYQLFKGLAQPVDFLALTASSIAGAILAVIVVLVFYYLIKLKRAFGDYTSIVFVNVIVWCVNFMMLFVFQVYPTLSCVYAICYFYATLYFPSEISVIMHLQWLVMYGTIMPLWFCLLYISVVVSNHAFWVFSYCRQLGTSVRSDGTFEEMALTTFMITKDSYCKLKNSLSDVAFNRYLSLYNKYRYYSGKMDTAAYREAACSQLAKAMDTFTNNNGSDVLYQPPTASVSTSFLQSGIVKMVNPTSKVEPCIVSVTYGNMTLNGLWLGDKVYCPRHVICSASDMTNPDYTNLLCRVTSSDFTVLFDRLSLTVMSYQMQGCMLVLTVTLQNSRTPKYTFGVVKPGETFTVLAAYNGKPQGAFHVTMRSSYTIKGSFLCGSCGSVVYVIMGDCVKFVYMHQLELSTGCHTGTDFNGDFYGPYKDAQVVQLPVQDYIQSVNFVAWLYAAILNNCNWFVQSDKCSVEDFNVWALSNGFSQVKSDLVIDALASMTGVSLETLLAAIKHLKNGFQGRQIMGSCSFEDELTPSDVYQQLAGIKLQSKRTRLVKGIVCWIMASTFLFSCIITAFVKWTMFMYVTTNMLSITFCALCVISLTMLLVKHKHLYLTMYIIPVLFTLLYNNYLVVYKQTFRGYVYAWLSYYVPSVEYTYTDEVIYGMLLLIGMVFVTLRSINQYLFSFIMFVGRVISVVSLWYMGSNLEEEILLMLASLFGTYTWTTALSMAAAKVIAKWVAVNVLYFTDIPQIKIVLVCYLFIGYIISCYWGLFSLMNSLFRMPLGVYNYKISVQELRYMNANGLRPPKNSFEALMLNFKLLGIGGVPIIEVSQFQSKLTDVKCANVVLLNCLQHLHVASNSKLWQYCSTLHNEILATSDLGVAFEKLAQLLIVLFANPAAVDSKCLTSIEEVCDDYAKDNTVLQALQSEFVNMASFVEYEVAKKNLDEACSSGSANQQQLKQLEKACNIAKSAYERDRAVARKLERMADLALTNMYKEARINDKKSKVVSALQTMLFSMVRKLDNQALNSILDNAVKGCVPLNAIPSLAANTLTIIVPDKSVYDQVVDNVYVTYAGNVWQIQTIQDSDGTNKQLHEISDDCNWPLVIIANRHNEVSATALQNNELMPAKLKTQVVNSGPDQTCNTPTQCYYNNSYNGKIVYAILSDVDGLKYTKILKDDGNFVVLELDPPCKFTVQDVKGLKIKYLYFVKGCNTLARGWVVGTISSTVRLQAGTATEYASNSSILSLCAFSVDPKKTYLDFIQQGGTPIANCVKMLCDHAGTGMAITVKPDATTSQDSYGGASVCIYCRARVEHPDVDGLCKLRGKFVQVPVGIKDPVSYVLTHDVCQVCGFWRDGSCSCVSTDTTVQSKDTNFLNGFGVRV</sequence>
<reference key="1">
    <citation type="submission" date="1993-08" db="EMBL/GenBank/DDBJ databases">
        <authorList>
            <person name="Brian D.A."/>
        </authorList>
    </citation>
    <scope>NUCLEOTIDE SEQUENCE [GENOMIC RNA]</scope>
</reference>
<reference key="2">
    <citation type="submission" date="2003-04" db="EMBL/GenBank/DDBJ databases">
        <authorList>
            <person name="Brian D.A."/>
        </authorList>
    </citation>
    <scope>SEQUENCE REVISION</scope>
</reference>
<accession>P0C6U0</accession>
<accession>Q66198</accession>
<dbReference type="EC" id="3.4.19.12"/>
<dbReference type="EC" id="3.4.22.-"/>
<dbReference type="EC" id="3.4.22.69"/>
<dbReference type="EC" id="2.7.7.50"/>
<dbReference type="EMBL" id="U00735">
    <property type="status" value="NOT_ANNOTATED_CDS"/>
    <property type="molecule type" value="Genomic_RNA"/>
</dbReference>
<dbReference type="SMR" id="P0C6U0"/>
<dbReference type="IntAct" id="P0C6U0">
    <property type="interactions" value="1"/>
</dbReference>
<dbReference type="Proteomes" id="UP000007554">
    <property type="component" value="Genome"/>
</dbReference>
<dbReference type="GO" id="GO:0033644">
    <property type="term" value="C:host cell membrane"/>
    <property type="evidence" value="ECO:0007669"/>
    <property type="project" value="UniProtKB-SubCell"/>
</dbReference>
<dbReference type="GO" id="GO:0044220">
    <property type="term" value="C:host cell perinuclear region of cytoplasm"/>
    <property type="evidence" value="ECO:0007669"/>
    <property type="project" value="UniProtKB-SubCell"/>
</dbReference>
<dbReference type="GO" id="GO:0016020">
    <property type="term" value="C:membrane"/>
    <property type="evidence" value="ECO:0007669"/>
    <property type="project" value="UniProtKB-KW"/>
</dbReference>
<dbReference type="GO" id="GO:0004843">
    <property type="term" value="F:cysteine-type deubiquitinase activity"/>
    <property type="evidence" value="ECO:0007669"/>
    <property type="project" value="UniProtKB-EC"/>
</dbReference>
<dbReference type="GO" id="GO:0004197">
    <property type="term" value="F:cysteine-type endopeptidase activity"/>
    <property type="evidence" value="ECO:0007669"/>
    <property type="project" value="InterPro"/>
</dbReference>
<dbReference type="GO" id="GO:0004519">
    <property type="term" value="F:endonuclease activity"/>
    <property type="evidence" value="ECO:0007669"/>
    <property type="project" value="UniProtKB-KW"/>
</dbReference>
<dbReference type="GO" id="GO:0008168">
    <property type="term" value="F:methyltransferase activity"/>
    <property type="evidence" value="ECO:0007669"/>
    <property type="project" value="UniProtKB-KW"/>
</dbReference>
<dbReference type="GO" id="GO:0008242">
    <property type="term" value="F:omega peptidase activity"/>
    <property type="evidence" value="ECO:0007669"/>
    <property type="project" value="InterPro"/>
</dbReference>
<dbReference type="GO" id="GO:0003968">
    <property type="term" value="F:RNA-directed RNA polymerase activity"/>
    <property type="evidence" value="ECO:0007669"/>
    <property type="project" value="InterPro"/>
</dbReference>
<dbReference type="GO" id="GO:0003727">
    <property type="term" value="F:single-stranded RNA binding"/>
    <property type="evidence" value="ECO:0007669"/>
    <property type="project" value="InterPro"/>
</dbReference>
<dbReference type="GO" id="GO:0008270">
    <property type="term" value="F:zinc ion binding"/>
    <property type="evidence" value="ECO:0007669"/>
    <property type="project" value="UniProtKB-KW"/>
</dbReference>
<dbReference type="GO" id="GO:0032259">
    <property type="term" value="P:methylation"/>
    <property type="evidence" value="ECO:0007669"/>
    <property type="project" value="UniProtKB-KW"/>
</dbReference>
<dbReference type="GO" id="GO:0006508">
    <property type="term" value="P:proteolysis"/>
    <property type="evidence" value="ECO:0007669"/>
    <property type="project" value="UniProtKB-KW"/>
</dbReference>
<dbReference type="GO" id="GO:0010506">
    <property type="term" value="P:regulation of autophagy"/>
    <property type="evidence" value="ECO:0007669"/>
    <property type="project" value="InterPro"/>
</dbReference>
<dbReference type="GO" id="GO:0039520">
    <property type="term" value="P:symbiont-mediated activation of host autophagy"/>
    <property type="evidence" value="ECO:0007669"/>
    <property type="project" value="UniProtKB-KW"/>
</dbReference>
<dbReference type="GO" id="GO:0039595">
    <property type="term" value="P:symbiont-mediated degradation of host mRNA"/>
    <property type="evidence" value="ECO:0007669"/>
    <property type="project" value="UniProtKB-KW"/>
</dbReference>
<dbReference type="GO" id="GO:0039648">
    <property type="term" value="P:symbiont-mediated perturbation of host ubiquitin-like protein modification"/>
    <property type="evidence" value="ECO:0007669"/>
    <property type="project" value="UniProtKB-KW"/>
</dbReference>
<dbReference type="GO" id="GO:0039548">
    <property type="term" value="P:symbiont-mediated suppression of host cytoplasmic pattern recognition receptor signaling pathway via inhibition of IRF3 activity"/>
    <property type="evidence" value="ECO:0007669"/>
    <property type="project" value="UniProtKB-KW"/>
</dbReference>
<dbReference type="GO" id="GO:0039657">
    <property type="term" value="P:symbiont-mediated suppression of host gene expression"/>
    <property type="evidence" value="ECO:0007669"/>
    <property type="project" value="UniProtKB-KW"/>
</dbReference>
<dbReference type="GO" id="GO:0039579">
    <property type="term" value="P:symbiont-mediated suppression of host ISG15-protein conjugation"/>
    <property type="evidence" value="ECO:0007669"/>
    <property type="project" value="UniProtKB-KW"/>
</dbReference>
<dbReference type="GO" id="GO:0039502">
    <property type="term" value="P:symbiont-mediated suppression of host type I interferon-mediated signaling pathway"/>
    <property type="evidence" value="ECO:0007669"/>
    <property type="project" value="UniProtKB-KW"/>
</dbReference>
<dbReference type="GO" id="GO:0019079">
    <property type="term" value="P:viral genome replication"/>
    <property type="evidence" value="ECO:0007669"/>
    <property type="project" value="InterPro"/>
</dbReference>
<dbReference type="GO" id="GO:0019082">
    <property type="term" value="P:viral protein processing"/>
    <property type="evidence" value="ECO:0007669"/>
    <property type="project" value="InterPro"/>
</dbReference>
<dbReference type="GO" id="GO:0075523">
    <property type="term" value="P:viral translational frameshifting"/>
    <property type="evidence" value="ECO:0007669"/>
    <property type="project" value="UniProtKB-KW"/>
</dbReference>
<dbReference type="CDD" id="cd21901">
    <property type="entry name" value="alpha_betaCoV_Nsp10"/>
    <property type="match status" value="1"/>
</dbReference>
<dbReference type="CDD" id="cd21560">
    <property type="entry name" value="betaCoV-Nsp6"/>
    <property type="match status" value="1"/>
</dbReference>
<dbReference type="CDD" id="cd21519">
    <property type="entry name" value="betaCoV_Nsp2_MHV-like"/>
    <property type="match status" value="1"/>
</dbReference>
<dbReference type="CDD" id="cd21827">
    <property type="entry name" value="betaCoV_Nsp7"/>
    <property type="match status" value="1"/>
</dbReference>
<dbReference type="CDD" id="cd21831">
    <property type="entry name" value="betaCoV_Nsp8"/>
    <property type="match status" value="1"/>
</dbReference>
<dbReference type="CDD" id="cd21898">
    <property type="entry name" value="betaCoV_Nsp9"/>
    <property type="match status" value="1"/>
</dbReference>
<dbReference type="CDD" id="cd21732">
    <property type="entry name" value="betaCoV_PLPro"/>
    <property type="match status" value="1"/>
</dbReference>
<dbReference type="CDD" id="cd21473">
    <property type="entry name" value="cv_Nsp4_TM"/>
    <property type="match status" value="1"/>
</dbReference>
<dbReference type="CDD" id="cd21524">
    <property type="entry name" value="DPUP_MHV_Nsp3"/>
    <property type="match status" value="1"/>
</dbReference>
<dbReference type="CDD" id="cd21557">
    <property type="entry name" value="Macro_X_Nsp3-like"/>
    <property type="match status" value="1"/>
</dbReference>
<dbReference type="CDD" id="cd21879">
    <property type="entry name" value="MHV-like_Nsp1"/>
    <property type="match status" value="1"/>
</dbReference>
<dbReference type="CDD" id="cd21812">
    <property type="entry name" value="MHV-like_Nsp3_betaSM"/>
    <property type="match status" value="1"/>
</dbReference>
<dbReference type="CDD" id="cd21824">
    <property type="entry name" value="MHV-like_Nsp3_NAB"/>
    <property type="match status" value="1"/>
</dbReference>
<dbReference type="CDD" id="cd21714">
    <property type="entry name" value="TM_Y_MHV-like_Nsp3_C"/>
    <property type="match status" value="1"/>
</dbReference>
<dbReference type="CDD" id="cd21467">
    <property type="entry name" value="Ubl1_cv_Nsp3_N-like"/>
    <property type="match status" value="1"/>
</dbReference>
<dbReference type="FunFam" id="1.10.150.420:FF:000001">
    <property type="entry name" value="Replicase polyprotein"/>
    <property type="match status" value="1"/>
</dbReference>
<dbReference type="Gene3D" id="1.10.8.1190">
    <property type="match status" value="2"/>
</dbReference>
<dbReference type="Gene3D" id="2.60.120.1680">
    <property type="match status" value="1"/>
</dbReference>
<dbReference type="Gene3D" id="3.10.20.350">
    <property type="match status" value="1"/>
</dbReference>
<dbReference type="Gene3D" id="3.10.20.540">
    <property type="match status" value="1"/>
</dbReference>
<dbReference type="Gene3D" id="6.10.140.2090">
    <property type="match status" value="1"/>
</dbReference>
<dbReference type="Gene3D" id="1.10.150.420">
    <property type="entry name" value="Coronavirus nonstructural protein 4 C-terminus"/>
    <property type="match status" value="1"/>
</dbReference>
<dbReference type="Gene3D" id="3.40.220.10">
    <property type="entry name" value="Leucine Aminopeptidase, subunit E, domain 1"/>
    <property type="match status" value="1"/>
</dbReference>
<dbReference type="Gene3D" id="1.10.1840.10">
    <property type="entry name" value="main proteinase (3clpro) structure, domain 3"/>
    <property type="match status" value="1"/>
</dbReference>
<dbReference type="Gene3D" id="1.10.8.370">
    <property type="entry name" value="nsp7 replicase"/>
    <property type="match status" value="1"/>
</dbReference>
<dbReference type="Gene3D" id="3.30.70.3540">
    <property type="entry name" value="Nsp8 replicase, head domain"/>
    <property type="match status" value="1"/>
</dbReference>
<dbReference type="Gene3D" id="2.40.10.250">
    <property type="entry name" value="Replicase NSP9"/>
    <property type="match status" value="1"/>
</dbReference>
<dbReference type="Gene3D" id="3.40.50.11020">
    <property type="entry name" value="Replicase polyprotein, nucleic acid-binding domain"/>
    <property type="match status" value="1"/>
</dbReference>
<dbReference type="Gene3D" id="2.40.10.10">
    <property type="entry name" value="Trypsin-like serine proteases"/>
    <property type="match status" value="2"/>
</dbReference>
<dbReference type="InterPro" id="IPR046443">
    <property type="entry name" value="a/bCoV_NSP1_glob"/>
</dbReference>
<dbReference type="InterPro" id="IPR022570">
    <property type="entry name" value="B-CoV_A_NSP1"/>
</dbReference>
<dbReference type="InterPro" id="IPR046442">
    <property type="entry name" value="bCoV_NSP1_C"/>
</dbReference>
<dbReference type="InterPro" id="IPR043613">
    <property type="entry name" value="CoV_NSP2_C"/>
</dbReference>
<dbReference type="InterPro" id="IPR047573">
    <property type="entry name" value="CoV_NSP2_M"/>
</dbReference>
<dbReference type="InterPro" id="IPR049894">
    <property type="entry name" value="COV_NSP3_3ECTO"/>
</dbReference>
<dbReference type="InterPro" id="IPR043611">
    <property type="entry name" value="CoV_NSP3_C"/>
</dbReference>
<dbReference type="InterPro" id="IPR047566">
    <property type="entry name" value="CoV_NSP3_Y"/>
</dbReference>
<dbReference type="InterPro" id="IPR032505">
    <property type="entry name" value="CoV_NSP4_C"/>
</dbReference>
<dbReference type="InterPro" id="IPR043612">
    <property type="entry name" value="CoV_NSP4_N"/>
</dbReference>
<dbReference type="InterPro" id="IPR022733">
    <property type="entry name" value="DPUP_SUD_C_bCoV"/>
</dbReference>
<dbReference type="InterPro" id="IPR002589">
    <property type="entry name" value="Macro_dom"/>
</dbReference>
<dbReference type="InterPro" id="IPR043472">
    <property type="entry name" value="Macro_dom-like"/>
</dbReference>
<dbReference type="InterPro" id="IPR044371">
    <property type="entry name" value="Macro_X_NSP3-like"/>
</dbReference>
<dbReference type="InterPro" id="IPR036333">
    <property type="entry name" value="NSP10_sf_CoV"/>
</dbReference>
<dbReference type="InterPro" id="IPR044384">
    <property type="entry name" value="NSP2_MHV-like"/>
</dbReference>
<dbReference type="InterPro" id="IPR043615">
    <property type="entry name" value="NSP2_N_CoV"/>
</dbReference>
<dbReference type="InterPro" id="IPR044381">
    <property type="entry name" value="NSP3_DPUP_MHV"/>
</dbReference>
<dbReference type="InterPro" id="IPR047567">
    <property type="entry name" value="NSP3_G2M_bCoV"/>
</dbReference>
<dbReference type="InterPro" id="IPR032592">
    <property type="entry name" value="NSP3_NAB_bCoV"/>
</dbReference>
<dbReference type="InterPro" id="IPR042570">
    <property type="entry name" value="NSP3_NAB_bCoV_sf"/>
</dbReference>
<dbReference type="InterPro" id="IPR044357">
    <property type="entry name" value="NSP3_Ubl1_dom_CoV"/>
</dbReference>
<dbReference type="InterPro" id="IPR044353">
    <property type="entry name" value="Nsp3_Ubl2_dom_CoV"/>
</dbReference>
<dbReference type="InterPro" id="IPR038083">
    <property type="entry name" value="NSP3A-like"/>
</dbReference>
<dbReference type="InterPro" id="IPR038123">
    <property type="entry name" value="NSP4_C_sf_CoV"/>
</dbReference>
<dbReference type="InterPro" id="IPR044367">
    <property type="entry name" value="NSP6_betaCoV"/>
</dbReference>
<dbReference type="InterPro" id="IPR043610">
    <property type="entry name" value="NSP6_CoV"/>
</dbReference>
<dbReference type="InterPro" id="IPR014828">
    <property type="entry name" value="NSP7_CoV"/>
</dbReference>
<dbReference type="InterPro" id="IPR037204">
    <property type="entry name" value="NSP7_sf_CoV"/>
</dbReference>
<dbReference type="InterPro" id="IPR014829">
    <property type="entry name" value="NSP8_CoV"/>
</dbReference>
<dbReference type="InterPro" id="IPR037230">
    <property type="entry name" value="NSP8_sf_CoV"/>
</dbReference>
<dbReference type="InterPro" id="IPR014822">
    <property type="entry name" value="NSP9_CoV"/>
</dbReference>
<dbReference type="InterPro" id="IPR036499">
    <property type="entry name" value="NSP9_sf_CoV"/>
</dbReference>
<dbReference type="InterPro" id="IPR002705">
    <property type="entry name" value="Pept_C30/C16_B_coronavir"/>
</dbReference>
<dbReference type="InterPro" id="IPR013016">
    <property type="entry name" value="Peptidase_C16_CoV"/>
</dbReference>
<dbReference type="InterPro" id="IPR008740">
    <property type="entry name" value="Peptidase_C30_CoV"/>
</dbReference>
<dbReference type="InterPro" id="IPR043477">
    <property type="entry name" value="Peptidase_C30_dom3_CoV"/>
</dbReference>
<dbReference type="InterPro" id="IPR009003">
    <property type="entry name" value="Peptidase_S1_PA"/>
</dbReference>
<dbReference type="InterPro" id="IPR043504">
    <property type="entry name" value="Peptidase_S1_PA_chymotrypsin"/>
</dbReference>
<dbReference type="InterPro" id="IPR043177">
    <property type="entry name" value="PLpro_N_sf_CoV"/>
</dbReference>
<dbReference type="InterPro" id="IPR043503">
    <property type="entry name" value="PLpro_palm_finger_dom_CoV"/>
</dbReference>
<dbReference type="InterPro" id="IPR043178">
    <property type="entry name" value="PLpro_thumb_sf_CoV"/>
</dbReference>
<dbReference type="InterPro" id="IPR018995">
    <property type="entry name" value="RNA_synth_NSP10_CoV"/>
</dbReference>
<dbReference type="Pfam" id="PF11963">
    <property type="entry name" value="B-CoV_A_NSP1"/>
    <property type="match status" value="1"/>
</dbReference>
<dbReference type="Pfam" id="PF16251">
    <property type="entry name" value="bCoV_NAB"/>
    <property type="match status" value="1"/>
</dbReference>
<dbReference type="Pfam" id="PF09401">
    <property type="entry name" value="CoV_NSP10"/>
    <property type="match status" value="1"/>
</dbReference>
<dbReference type="Pfam" id="PF19218">
    <property type="entry name" value="CoV_NSP3_C"/>
    <property type="match status" value="1"/>
</dbReference>
<dbReference type="Pfam" id="PF16348">
    <property type="entry name" value="CoV_NSP4_C"/>
    <property type="match status" value="1"/>
</dbReference>
<dbReference type="Pfam" id="PF19217">
    <property type="entry name" value="CoV_NSP4_N"/>
    <property type="match status" value="1"/>
</dbReference>
<dbReference type="Pfam" id="PF19213">
    <property type="entry name" value="CoV_NSP6"/>
    <property type="match status" value="1"/>
</dbReference>
<dbReference type="Pfam" id="PF08716">
    <property type="entry name" value="CoV_NSP7"/>
    <property type="match status" value="1"/>
</dbReference>
<dbReference type="Pfam" id="PF08717">
    <property type="entry name" value="CoV_NSP8"/>
    <property type="match status" value="1"/>
</dbReference>
<dbReference type="Pfam" id="PF08710">
    <property type="entry name" value="CoV_NSP9"/>
    <property type="match status" value="1"/>
</dbReference>
<dbReference type="Pfam" id="PF08715">
    <property type="entry name" value="CoV_peptidase"/>
    <property type="match status" value="1"/>
</dbReference>
<dbReference type="Pfam" id="PF01661">
    <property type="entry name" value="Macro"/>
    <property type="match status" value="1"/>
</dbReference>
<dbReference type="Pfam" id="PF22104">
    <property type="entry name" value="MHV_Nsp3_DPUP"/>
    <property type="match status" value="1"/>
</dbReference>
<dbReference type="Pfam" id="PF01831">
    <property type="entry name" value="Peptidase_C16"/>
    <property type="match status" value="1"/>
</dbReference>
<dbReference type="Pfam" id="PF05409">
    <property type="entry name" value="Peptidase_C30"/>
    <property type="match status" value="1"/>
</dbReference>
<dbReference type="SMART" id="SM00506">
    <property type="entry name" value="A1pp"/>
    <property type="match status" value="1"/>
</dbReference>
<dbReference type="SUPFAM" id="SSF144246">
    <property type="entry name" value="Coronavirus NSP10-like"/>
    <property type="match status" value="1"/>
</dbReference>
<dbReference type="SUPFAM" id="SSF140367">
    <property type="entry name" value="Coronavirus NSP7-like"/>
    <property type="match status" value="1"/>
</dbReference>
<dbReference type="SUPFAM" id="SSF143076">
    <property type="entry name" value="Coronavirus NSP8-like"/>
    <property type="match status" value="1"/>
</dbReference>
<dbReference type="SUPFAM" id="SSF52949">
    <property type="entry name" value="Macro domain-like"/>
    <property type="match status" value="1"/>
</dbReference>
<dbReference type="SUPFAM" id="SSF159936">
    <property type="entry name" value="NSP3A-like"/>
    <property type="match status" value="1"/>
</dbReference>
<dbReference type="SUPFAM" id="SSF101816">
    <property type="entry name" value="Replicase NSP9"/>
    <property type="match status" value="1"/>
</dbReference>
<dbReference type="SUPFAM" id="SSF50494">
    <property type="entry name" value="Trypsin-like serine proteases"/>
    <property type="match status" value="1"/>
</dbReference>
<dbReference type="PROSITE" id="PS51963">
    <property type="entry name" value="BCOV_NSP1_C"/>
    <property type="match status" value="1"/>
</dbReference>
<dbReference type="PROSITE" id="PS51942">
    <property type="entry name" value="BCOV_NSP3C_C"/>
    <property type="match status" value="1"/>
</dbReference>
<dbReference type="PROSITE" id="PS51994">
    <property type="entry name" value="BCOV_NSP3E_G2M"/>
    <property type="match status" value="1"/>
</dbReference>
<dbReference type="PROSITE" id="PS51945">
    <property type="entry name" value="BCOV_NSP3E_NAB"/>
    <property type="match status" value="1"/>
</dbReference>
<dbReference type="PROSITE" id="PS51993">
    <property type="entry name" value="COV_3ECTO"/>
    <property type="match status" value="1"/>
</dbReference>
<dbReference type="PROSITE" id="PS51952">
    <property type="entry name" value="COV_EXON_MTASE_COACT"/>
    <property type="match status" value="1"/>
</dbReference>
<dbReference type="PROSITE" id="PS51962">
    <property type="entry name" value="COV_NSP1"/>
    <property type="match status" value="1"/>
</dbReference>
<dbReference type="PROSITE" id="PS51991">
    <property type="entry name" value="COV_NSP2_C"/>
    <property type="match status" value="1"/>
</dbReference>
<dbReference type="PROSITE" id="PS51990">
    <property type="entry name" value="COV_NSP2_M"/>
    <property type="match status" value="1"/>
</dbReference>
<dbReference type="PROSITE" id="PS51989">
    <property type="entry name" value="COV_NSP2_N"/>
    <property type="match status" value="1"/>
</dbReference>
<dbReference type="PROSITE" id="PS51992">
    <property type="entry name" value="COV_NSP3_Y"/>
    <property type="match status" value="1"/>
</dbReference>
<dbReference type="PROSITE" id="PS51943">
    <property type="entry name" value="COV_NSP3A_UBL"/>
    <property type="match status" value="1"/>
</dbReference>
<dbReference type="PROSITE" id="PS51944">
    <property type="entry name" value="COV_NSP3D_UBL"/>
    <property type="match status" value="1"/>
</dbReference>
<dbReference type="PROSITE" id="PS51946">
    <property type="entry name" value="COV_NSP4C"/>
    <property type="match status" value="1"/>
</dbReference>
<dbReference type="PROSITE" id="PS51949">
    <property type="entry name" value="COV_NSP7"/>
    <property type="match status" value="1"/>
</dbReference>
<dbReference type="PROSITE" id="PS51950">
    <property type="entry name" value="COV_NSP8"/>
    <property type="match status" value="1"/>
</dbReference>
<dbReference type="PROSITE" id="PS51951">
    <property type="entry name" value="COV_NSP9_SSRNA_BD"/>
    <property type="match status" value="1"/>
</dbReference>
<dbReference type="PROSITE" id="PS51442">
    <property type="entry name" value="M_PRO"/>
    <property type="match status" value="1"/>
</dbReference>
<dbReference type="PROSITE" id="PS51154">
    <property type="entry name" value="MACRO"/>
    <property type="match status" value="1"/>
</dbReference>
<dbReference type="PROSITE" id="PS51124">
    <property type="entry name" value="PEPTIDASE_C16"/>
    <property type="match status" value="2"/>
</dbReference>